<gene>
    <name evidence="1" type="primary">purL</name>
    <name type="ordered locus">Pro_0003</name>
</gene>
<dbReference type="EC" id="6.3.5.3" evidence="1"/>
<dbReference type="EMBL" id="AE017126">
    <property type="protein sequence ID" value="AAP99049.1"/>
    <property type="status" value="ALT_INIT"/>
    <property type="molecule type" value="Genomic_DNA"/>
</dbReference>
<dbReference type="RefSeq" id="NP_874397.1">
    <property type="nucleotide sequence ID" value="NC_005042.1"/>
</dbReference>
<dbReference type="SMR" id="Q7VEK9"/>
<dbReference type="STRING" id="167539.Pro_0003"/>
<dbReference type="EnsemblBacteria" id="AAP99049">
    <property type="protein sequence ID" value="AAP99049"/>
    <property type="gene ID" value="Pro_0003"/>
</dbReference>
<dbReference type="KEGG" id="pma:Pro_0003"/>
<dbReference type="PATRIC" id="fig|167539.5.peg.3"/>
<dbReference type="eggNOG" id="COG0046">
    <property type="taxonomic scope" value="Bacteria"/>
</dbReference>
<dbReference type="HOGENOM" id="CLU_003100_0_1_3"/>
<dbReference type="OrthoDB" id="9804441at2"/>
<dbReference type="UniPathway" id="UPA00074">
    <property type="reaction ID" value="UER00128"/>
</dbReference>
<dbReference type="Proteomes" id="UP000001420">
    <property type="component" value="Chromosome"/>
</dbReference>
<dbReference type="GO" id="GO:0005737">
    <property type="term" value="C:cytoplasm"/>
    <property type="evidence" value="ECO:0007669"/>
    <property type="project" value="UniProtKB-SubCell"/>
</dbReference>
<dbReference type="GO" id="GO:0005524">
    <property type="term" value="F:ATP binding"/>
    <property type="evidence" value="ECO:0007669"/>
    <property type="project" value="UniProtKB-UniRule"/>
</dbReference>
<dbReference type="GO" id="GO:0000287">
    <property type="term" value="F:magnesium ion binding"/>
    <property type="evidence" value="ECO:0007669"/>
    <property type="project" value="UniProtKB-UniRule"/>
</dbReference>
<dbReference type="GO" id="GO:0004642">
    <property type="term" value="F:phosphoribosylformylglycinamidine synthase activity"/>
    <property type="evidence" value="ECO:0007669"/>
    <property type="project" value="UniProtKB-UniRule"/>
</dbReference>
<dbReference type="GO" id="GO:0006189">
    <property type="term" value="P:'de novo' IMP biosynthetic process"/>
    <property type="evidence" value="ECO:0007669"/>
    <property type="project" value="UniProtKB-UniRule"/>
</dbReference>
<dbReference type="CDD" id="cd02203">
    <property type="entry name" value="PurL_repeat1"/>
    <property type="match status" value="1"/>
</dbReference>
<dbReference type="CDD" id="cd02204">
    <property type="entry name" value="PurL_repeat2"/>
    <property type="match status" value="1"/>
</dbReference>
<dbReference type="FunFam" id="3.30.1330.10:FF:000004">
    <property type="entry name" value="Phosphoribosylformylglycinamidine synthase subunit PurL"/>
    <property type="match status" value="1"/>
</dbReference>
<dbReference type="Gene3D" id="3.90.650.10">
    <property type="entry name" value="PurM-like C-terminal domain"/>
    <property type="match status" value="2"/>
</dbReference>
<dbReference type="Gene3D" id="3.30.1330.10">
    <property type="entry name" value="PurM-like, N-terminal domain"/>
    <property type="match status" value="2"/>
</dbReference>
<dbReference type="HAMAP" id="MF_00420">
    <property type="entry name" value="PurL_2"/>
    <property type="match status" value="1"/>
</dbReference>
<dbReference type="InterPro" id="IPR010074">
    <property type="entry name" value="PRibForGlyAmidine_synth_PurL"/>
</dbReference>
<dbReference type="InterPro" id="IPR041609">
    <property type="entry name" value="PurL_linker"/>
</dbReference>
<dbReference type="InterPro" id="IPR010918">
    <property type="entry name" value="PurM-like_C_dom"/>
</dbReference>
<dbReference type="InterPro" id="IPR036676">
    <property type="entry name" value="PurM-like_C_sf"/>
</dbReference>
<dbReference type="InterPro" id="IPR016188">
    <property type="entry name" value="PurM-like_N"/>
</dbReference>
<dbReference type="InterPro" id="IPR036921">
    <property type="entry name" value="PurM-like_N_sf"/>
</dbReference>
<dbReference type="NCBIfam" id="TIGR01736">
    <property type="entry name" value="FGAM_synth_II"/>
    <property type="match status" value="1"/>
</dbReference>
<dbReference type="NCBIfam" id="NF002290">
    <property type="entry name" value="PRK01213.1"/>
    <property type="match status" value="1"/>
</dbReference>
<dbReference type="PANTHER" id="PTHR43555">
    <property type="entry name" value="PHOSPHORIBOSYLFORMYLGLYCINAMIDINE SYNTHASE SUBUNIT PURL"/>
    <property type="match status" value="1"/>
</dbReference>
<dbReference type="PANTHER" id="PTHR43555:SF1">
    <property type="entry name" value="PHOSPHORIBOSYLFORMYLGLYCINAMIDINE SYNTHASE SUBUNIT PURL"/>
    <property type="match status" value="1"/>
</dbReference>
<dbReference type="Pfam" id="PF00586">
    <property type="entry name" value="AIRS"/>
    <property type="match status" value="2"/>
</dbReference>
<dbReference type="Pfam" id="PF02769">
    <property type="entry name" value="AIRS_C"/>
    <property type="match status" value="2"/>
</dbReference>
<dbReference type="Pfam" id="PF18072">
    <property type="entry name" value="FGAR-AT_linker"/>
    <property type="match status" value="1"/>
</dbReference>
<dbReference type="PIRSF" id="PIRSF001587">
    <property type="entry name" value="FGAM_synthase_II"/>
    <property type="match status" value="1"/>
</dbReference>
<dbReference type="SUPFAM" id="SSF56042">
    <property type="entry name" value="PurM C-terminal domain-like"/>
    <property type="match status" value="2"/>
</dbReference>
<dbReference type="SUPFAM" id="SSF55326">
    <property type="entry name" value="PurM N-terminal domain-like"/>
    <property type="match status" value="2"/>
</dbReference>
<feature type="chain" id="PRO_0000100477" description="Phosphoribosylformylglycinamidine synthase subunit PurL">
    <location>
        <begin position="1"/>
        <end position="793"/>
    </location>
</feature>
<feature type="active site" evidence="1">
    <location>
        <position position="53"/>
    </location>
</feature>
<feature type="active site" description="Proton acceptor" evidence="1">
    <location>
        <position position="99"/>
    </location>
</feature>
<feature type="binding site" evidence="1">
    <location>
        <position position="56"/>
    </location>
    <ligand>
        <name>ATP</name>
        <dbReference type="ChEBI" id="CHEBI:30616"/>
    </ligand>
</feature>
<feature type="binding site" evidence="1">
    <location>
        <position position="95"/>
    </location>
    <ligand>
        <name>ATP</name>
        <dbReference type="ChEBI" id="CHEBI:30616"/>
    </ligand>
</feature>
<feature type="binding site" evidence="1">
    <location>
        <position position="97"/>
    </location>
    <ligand>
        <name>Mg(2+)</name>
        <dbReference type="ChEBI" id="CHEBI:18420"/>
        <label>1</label>
    </ligand>
</feature>
<feature type="binding site" evidence="1">
    <location>
        <begin position="98"/>
        <end position="101"/>
    </location>
    <ligand>
        <name>substrate</name>
    </ligand>
</feature>
<feature type="binding site" evidence="1">
    <location>
        <position position="120"/>
    </location>
    <ligand>
        <name>substrate</name>
    </ligand>
</feature>
<feature type="binding site" evidence="1">
    <location>
        <position position="121"/>
    </location>
    <ligand>
        <name>Mg(2+)</name>
        <dbReference type="ChEBI" id="CHEBI:18420"/>
        <label>2</label>
    </ligand>
</feature>
<feature type="binding site" evidence="1">
    <location>
        <position position="244"/>
    </location>
    <ligand>
        <name>substrate</name>
    </ligand>
</feature>
<feature type="binding site" evidence="1">
    <location>
        <position position="272"/>
    </location>
    <ligand>
        <name>Mg(2+)</name>
        <dbReference type="ChEBI" id="CHEBI:18420"/>
        <label>2</label>
    </ligand>
</feature>
<feature type="binding site" evidence="1">
    <location>
        <begin position="316"/>
        <end position="318"/>
    </location>
    <ligand>
        <name>substrate</name>
    </ligand>
</feature>
<feature type="binding site" evidence="1">
    <location>
        <position position="523"/>
    </location>
    <ligand>
        <name>ATP</name>
        <dbReference type="ChEBI" id="CHEBI:30616"/>
    </ligand>
</feature>
<feature type="binding site" evidence="1">
    <location>
        <position position="560"/>
    </location>
    <ligand>
        <name>ATP</name>
        <dbReference type="ChEBI" id="CHEBI:30616"/>
    </ligand>
</feature>
<feature type="binding site" evidence="1">
    <location>
        <position position="561"/>
    </location>
    <ligand>
        <name>Mg(2+)</name>
        <dbReference type="ChEBI" id="CHEBI:18420"/>
        <label>1</label>
    </ligand>
</feature>
<feature type="binding site" evidence="1">
    <location>
        <position position="563"/>
    </location>
    <ligand>
        <name>substrate</name>
    </ligand>
</feature>
<name>PURL_PROMA</name>
<reference key="1">
    <citation type="journal article" date="2003" name="Proc. Natl. Acad. Sci. U.S.A.">
        <title>Genome sequence of the cyanobacterium Prochlorococcus marinus SS120, a nearly minimal oxyphototrophic genome.</title>
        <authorList>
            <person name="Dufresne A."/>
            <person name="Salanoubat M."/>
            <person name="Partensky F."/>
            <person name="Artiguenave F."/>
            <person name="Axmann I.M."/>
            <person name="Barbe V."/>
            <person name="Duprat S."/>
            <person name="Galperin M.Y."/>
            <person name="Koonin E.V."/>
            <person name="Le Gall F."/>
            <person name="Makarova K.S."/>
            <person name="Ostrowski M."/>
            <person name="Oztas S."/>
            <person name="Robert C."/>
            <person name="Rogozin I.B."/>
            <person name="Scanlan D.J."/>
            <person name="Tandeau de Marsac N."/>
            <person name="Weissenbach J."/>
            <person name="Wincker P."/>
            <person name="Wolf Y.I."/>
            <person name="Hess W.R."/>
        </authorList>
    </citation>
    <scope>NUCLEOTIDE SEQUENCE [LARGE SCALE GENOMIC DNA]</scope>
    <source>
        <strain>SARG / CCMP1375 / SS120</strain>
    </source>
</reference>
<protein>
    <recommendedName>
        <fullName evidence="1">Phosphoribosylformylglycinamidine synthase subunit PurL</fullName>
        <shortName evidence="1">FGAM synthase</shortName>
        <ecNumber evidence="1">6.3.5.3</ecNumber>
    </recommendedName>
    <alternativeName>
        <fullName evidence="1">Formylglycinamide ribonucleotide amidotransferase subunit II</fullName>
        <shortName evidence="1">FGAR amidotransferase II</shortName>
        <shortName evidence="1">FGAR-AT II</shortName>
    </alternativeName>
    <alternativeName>
        <fullName evidence="1">Glutamine amidotransferase PurL</fullName>
    </alternativeName>
    <alternativeName>
        <fullName evidence="1">Phosphoribosylformylglycinamidine synthase subunit II</fullName>
    </alternativeName>
</protein>
<organism>
    <name type="scientific">Prochlorococcus marinus (strain SARG / CCMP1375 / SS120)</name>
    <dbReference type="NCBI Taxonomy" id="167539"/>
    <lineage>
        <taxon>Bacteria</taxon>
        <taxon>Bacillati</taxon>
        <taxon>Cyanobacteriota</taxon>
        <taxon>Cyanophyceae</taxon>
        <taxon>Synechococcales</taxon>
        <taxon>Prochlorococcaceae</taxon>
        <taxon>Prochlorococcus</taxon>
    </lineage>
</organism>
<sequence length="793" mass="86331">MIKSKDYLVDYNVELALKKEGLTKADYIEICNRLKRSPNRTELGMFGVMWSEHCCYRNSRSLLSNFPTTGKNILVGPGENAGVVDLGEGQRLAFKIESHNHPSAIEPFQGAATGVGGILRDIFTMGARPIALLNSLRFGPLDTPINVGLLEGVVSGIAHYGNCVGVPTVGGEVAFDKSYSGNPLVNAMALGIMETKEIVCSGAKGIDFPVIYVGSTTGRDGMGGASFASSELTQASIDDRPAVQVGDPFLEKGLIEGCLEAFKTGYVVAAQDMGAAGLTCSCSEMAAKGGVGIELDLDLVPAREKNMTAYEFLLSESQERMLFVVEPGKEELIMNKFRKWGLQAKVVGKVLEENIVRVIHEKQIVVNLPADSLAEDTPVNKHELLEEPPGFIKDHWKWDETSLPKVSIKGVHFKENNTILDWNQIILRLLDDPTIASKRWIYNQYDYQVQNNTIIAPGIGDAALIRLREIENQNQNSNRGIAAVVDCPNRWVALDPERGAIAAVAEASRNISCVGAKPLAVTDNLNFSSPEDPIGYWQLAKACKGLSKACVVLETPVTGGNVSLYNETALPNGLKQPIQPTPVVGMIGLIQDINSATRQGWKDQGDQIYLLGTSIDPSILNNQNISLAATSYLENIYGLKTGRPPLIDLEFEKLVQLFLRESIANNLIKSAHDISDGGLVIGLAESCISSGLGIECNLPEIDNRLDKLLFAEGGSRVLVSVSPNNIHNIKNSLNNFNIANSEQISFNYLGTVTDNKYFQININQTKIIDLSVNEITNKFERSIPRRINSTIVS</sequence>
<comment type="function">
    <text evidence="1">Part of the phosphoribosylformylglycinamidine synthase complex involved in the purines biosynthetic pathway. Catalyzes the ATP-dependent conversion of formylglycinamide ribonucleotide (FGAR) and glutamine to yield formylglycinamidine ribonucleotide (FGAM) and glutamate. The FGAM synthase complex is composed of three subunits. PurQ produces an ammonia molecule by converting glutamine to glutamate. PurL transfers the ammonia molecule to FGAR to form FGAM in an ATP-dependent manner. PurS interacts with PurQ and PurL and is thought to assist in the transfer of the ammonia molecule from PurQ to PurL.</text>
</comment>
<comment type="catalytic activity">
    <reaction evidence="1">
        <text>N(2)-formyl-N(1)-(5-phospho-beta-D-ribosyl)glycinamide + L-glutamine + ATP + H2O = 2-formamido-N(1)-(5-O-phospho-beta-D-ribosyl)acetamidine + L-glutamate + ADP + phosphate + H(+)</text>
        <dbReference type="Rhea" id="RHEA:17129"/>
        <dbReference type="ChEBI" id="CHEBI:15377"/>
        <dbReference type="ChEBI" id="CHEBI:15378"/>
        <dbReference type="ChEBI" id="CHEBI:29985"/>
        <dbReference type="ChEBI" id="CHEBI:30616"/>
        <dbReference type="ChEBI" id="CHEBI:43474"/>
        <dbReference type="ChEBI" id="CHEBI:58359"/>
        <dbReference type="ChEBI" id="CHEBI:147286"/>
        <dbReference type="ChEBI" id="CHEBI:147287"/>
        <dbReference type="ChEBI" id="CHEBI:456216"/>
        <dbReference type="EC" id="6.3.5.3"/>
    </reaction>
</comment>
<comment type="pathway">
    <text evidence="1">Purine metabolism; IMP biosynthesis via de novo pathway; 5-amino-1-(5-phospho-D-ribosyl)imidazole from N(2)-formyl-N(1)-(5-phospho-D-ribosyl)glycinamide: step 1/2.</text>
</comment>
<comment type="subunit">
    <text evidence="1">Monomer. Part of the FGAM synthase complex composed of 1 PurL, 1 PurQ and 2 PurS subunits.</text>
</comment>
<comment type="subcellular location">
    <subcellularLocation>
        <location evidence="1">Cytoplasm</location>
    </subcellularLocation>
</comment>
<comment type="similarity">
    <text evidence="1">Belongs to the FGAMS family.</text>
</comment>
<comment type="sequence caution" evidence="2">
    <conflict type="erroneous initiation">
        <sequence resource="EMBL-CDS" id="AAP99049"/>
    </conflict>
    <text>Extended N-terminus.</text>
</comment>
<keyword id="KW-0067">ATP-binding</keyword>
<keyword id="KW-0963">Cytoplasm</keyword>
<keyword id="KW-0436">Ligase</keyword>
<keyword id="KW-0460">Magnesium</keyword>
<keyword id="KW-0479">Metal-binding</keyword>
<keyword id="KW-0547">Nucleotide-binding</keyword>
<keyword id="KW-0658">Purine biosynthesis</keyword>
<keyword id="KW-1185">Reference proteome</keyword>
<accession>Q7VEK9</accession>
<evidence type="ECO:0000255" key="1">
    <source>
        <dbReference type="HAMAP-Rule" id="MF_00420"/>
    </source>
</evidence>
<evidence type="ECO:0000305" key="2"/>
<proteinExistence type="inferred from homology"/>